<accession>P80175</accession>
<evidence type="ECO:0000250" key="1"/>
<evidence type="ECO:0000269" key="2">
    <source>
    </source>
</evidence>
<evidence type="ECO:0000269" key="3">
    <source>
    </source>
</evidence>
<evidence type="ECO:0000269" key="4">
    <source>
    </source>
</evidence>
<evidence type="ECO:0000303" key="5">
    <source>
    </source>
</evidence>
<evidence type="ECO:0000305" key="6"/>
<comment type="function">
    <text evidence="3">Catalytically different from common alcohol dehydrogenases. Effective in oxidizing ethanol, other primary alcohols and benzylalcohol only in the presence of p-nitroso-N,N-dimethylaniline (NDMA) as an electron acceptor. NADH acts as a cofactor here instead as a coenzyme.</text>
</comment>
<comment type="catalytic activity">
    <reaction evidence="3">
        <text>N,N-dimethyl-4-nitrosoaniline + a primary alcohol = 4-(hydroxylamino)-N,N-dimethylaniline + an aldehyde</text>
        <dbReference type="Rhea" id="RHEA:48076"/>
        <dbReference type="ChEBI" id="CHEBI:15734"/>
        <dbReference type="ChEBI" id="CHEBI:17478"/>
        <dbReference type="ChEBI" id="CHEBI:59990"/>
        <dbReference type="ChEBI" id="CHEBI:59991"/>
    </reaction>
</comment>
<comment type="catalytic activity">
    <reaction evidence="3">
        <text>ethanol + A = acetaldehyde + AH2</text>
        <dbReference type="Rhea" id="RHEA:33567"/>
        <dbReference type="ChEBI" id="CHEBI:13193"/>
        <dbReference type="ChEBI" id="CHEBI:15343"/>
        <dbReference type="ChEBI" id="CHEBI:16236"/>
        <dbReference type="ChEBI" id="CHEBI:17499"/>
        <dbReference type="EC" id="1.1.99.36"/>
    </reaction>
</comment>
<comment type="cofactor">
    <cofactor evidence="3">
        <name>NADH</name>
        <dbReference type="ChEBI" id="CHEBI:57945"/>
    </cofactor>
</comment>
<comment type="activity regulation">
    <text evidence="2 3 4">Inhibited by trans-4-(N,N-dimethylamino)-cinnamaldehyde through direct binding to the catalytic zinc ion in a substrate-like geometry. Isobutyramide acts as a competitive inhibitor with respect to the electron acceptor NDMA. Acetaldehyde, AMP, ADP, ATP, as well as CuSO(4), FeSO(4), HgCl(2), NiCl(2), ZnSO(4), KCN, and NaN(3) are additional inhibitors of the catalytic activity.</text>
</comment>
<comment type="biophysicochemical properties">
    <kinetics>
        <KM evidence="3">0.082 mM for ethanol</KM>
        <KM evidence="3">0.0039 mM for 1-propanol</KM>
        <KM evidence="3">0.0025 mM for 1-butanol</KM>
        <KM evidence="3">13.4 mM for 2-propanol</KM>
        <KM evidence="3">10.1 mM for 2-butanol</KM>
        <KM evidence="3">6 mM for formaldehyde</KM>
        <Vmax evidence="3">5.9 umol/min/mg enzyme toward ethanol</Vmax>
        <Vmax evidence="3">6.09 umol/min/mg enzyme toward 1-propanol</Vmax>
        <Vmax evidence="3">6.09 umol/min/mg enzyme toward 1-butanol</Vmax>
        <Vmax evidence="3">5.94 umol/min/mg enzyme toward 2-propanol</Vmax>
        <Vmax evidence="3">5.7 umol/min/mg enzyme toward 2-butanol</Vmax>
        <Vmax evidence="3">5.7 umol/min/mg enzyme toward benzylalcohol</Vmax>
        <Vmax evidence="3">4.96 umol/min/mg enzyme toward formaldehyde</Vmax>
        <text evidence="3">KM for benzylalcohol is lower than 0.005 mM.</text>
    </kinetics>
    <phDependence>
        <text evidence="3">Optimum pH is 7.</text>
    </phDependence>
    <temperatureDependence>
        <text evidence="3">Optimum temperature is 45 degrees Celsius.</text>
    </temperatureDependence>
</comment>
<comment type="subunit">
    <text evidence="3">Homotrimer.</text>
</comment>
<comment type="similarity">
    <text evidence="6">Belongs to the zinc-containing alcohol dehydrogenase family.</text>
</comment>
<reference key="1">
    <citation type="journal article" date="2003" name="Cell. Mol. Life Sci.">
        <title>Nicotinoprotein (NAD+ -containing) alcohol dehydrogenase: structural relationships and functional interpretations.</title>
        <authorList>
            <person name="Norin A."/>
            <person name="Piersma S.R."/>
            <person name="Duine J.A."/>
            <person name="Jornvall H."/>
        </authorList>
    </citation>
    <scope>PROTEIN SEQUENCE</scope>
</reference>
<reference key="2">
    <citation type="journal article" date="1993" name="Eur. J. Biochem.">
        <title>Nicotinoprotein [NAD(P)-containing] alcohol/aldehyde oxidoreductases. Purification and characterization of a novel type from Amycolatopsis methanolica.</title>
        <authorList>
            <person name="van Ophem P.W."/>
            <person name="van Beeumen J."/>
            <person name="Duine J.A."/>
        </authorList>
    </citation>
    <scope>PROTEIN SEQUENCE OF 1-41</scope>
    <scope>FUNCTION</scope>
    <scope>CATALYTIC ACTIVITY</scope>
    <scope>COFACTOR</scope>
    <scope>BIOPHYSICOCHEMICAL PROPERTIES</scope>
    <scope>ACTIVITY REGULATION</scope>
    <scope>SUBUNIT</scope>
    <source>
        <strain>DSM 44096 / JCM 8087 / NBRC 15065 / NCIMB 11946 / NRRL B-24139 / LMD 80.32 / 239</strain>
    </source>
</reference>
<reference key="3">
    <citation type="journal article" date="1998" name="Biochemistry">
        <title>Optical spectroscopy of nicotinoprotein alcohol dehydrogenase from Amycolatopsis methanolica: a comparison with horse liver alcohol dehydrogenase and UDP-galactose epimerase.</title>
        <authorList>
            <person name="Piersma S.R."/>
            <person name="Visser A.J."/>
            <person name="de Vries S."/>
            <person name="Duine J.A."/>
        </authorList>
    </citation>
    <scope>ACTIVITY REGULATION</scope>
</reference>
<reference key="4">
    <citation type="journal article" date="2003" name="J. Protein Chem.">
        <title>Inhibition of nicotinoprotein (NAD+-containing) alcohol dehydrogenase by trans-4-(N,N-dimethylamino)-cinnamaldehyde binding to the active site.</title>
        <authorList>
            <person name="Piersma S.R."/>
            <person name="Norin A."/>
            <person name="de Vries S."/>
            <person name="Jornvall H."/>
            <person name="Duine J.A."/>
        </authorList>
    </citation>
    <scope>ACTIVITY REGULATION</scope>
</reference>
<feature type="chain" id="PRO_0000064453" description="NDMA-dependent alcohol dehydrogenase">
    <location>
        <begin position="1"/>
        <end position="371"/>
    </location>
</feature>
<feature type="binding site" evidence="1">
    <location>
        <position position="40"/>
    </location>
    <ligand>
        <name>Zn(2+)</name>
        <dbReference type="ChEBI" id="CHEBI:29105"/>
        <label>1</label>
        <note>catalytic</note>
    </ligand>
</feature>
<feature type="binding site" evidence="1">
    <location>
        <position position="61"/>
    </location>
    <ligand>
        <name>Zn(2+)</name>
        <dbReference type="ChEBI" id="CHEBI:29105"/>
        <label>1</label>
        <note>catalytic</note>
    </ligand>
</feature>
<feature type="binding site" evidence="1">
    <location>
        <position position="91"/>
    </location>
    <ligand>
        <name>Zn(2+)</name>
        <dbReference type="ChEBI" id="CHEBI:29105"/>
        <label>2</label>
    </ligand>
</feature>
<feature type="binding site" evidence="1">
    <location>
        <position position="94"/>
    </location>
    <ligand>
        <name>Zn(2+)</name>
        <dbReference type="ChEBI" id="CHEBI:29105"/>
        <label>2</label>
    </ligand>
</feature>
<feature type="binding site" evidence="1">
    <location>
        <position position="97"/>
    </location>
    <ligand>
        <name>Zn(2+)</name>
        <dbReference type="ChEBI" id="CHEBI:29105"/>
        <label>2</label>
    </ligand>
</feature>
<feature type="binding site" evidence="1">
    <location>
        <position position="105"/>
    </location>
    <ligand>
        <name>Zn(2+)</name>
        <dbReference type="ChEBI" id="CHEBI:29105"/>
        <label>2</label>
    </ligand>
</feature>
<feature type="binding site" evidence="1">
    <location>
        <position position="167"/>
    </location>
    <ligand>
        <name>Zn(2+)</name>
        <dbReference type="ChEBI" id="CHEBI:29105"/>
        <label>1</label>
        <note>catalytic</note>
    </ligand>
</feature>
<sequence>MKTKAAVLHSAGKPFEIEELELDGPREGEVLIKYTAAGLCHSDLHLIDNDLVPRFPIVGGHEGAGVIEDVGPGVTKVKPGDHVVCSFIPNCGTCRYCATGRSNLCDMGATILDGGMPDGSFRFHRGGTDYGAMCMLGTFSERATISQHSVVKVDDWLPLETAVLVGCGVPTGWASANYAGGVRAGDTCVVYGIGGIGINAVQGAAHAGAANVIAVDPVAFKREKALELGATHAFASADEAAAKVAELTWGQMADQALITVGTVVEQVVTDAFNVIGKGGTVVITGLANPEKLTVHLSGGVMTLFEKTVKGTLFGSANPQYDIVRLLRLYQAGHVKLDELVTKRYSLEEVNEGYQDLRDGKNIRGVIMHSAD</sequence>
<keyword id="KW-0903">Direct protein sequencing</keyword>
<keyword id="KW-0479">Metal-binding</keyword>
<keyword id="KW-0520">NAD</keyword>
<keyword id="KW-0560">Oxidoreductase</keyword>
<keyword id="KW-0862">Zinc</keyword>
<organism>
    <name type="scientific">Amycolatopsis methanolica</name>
    <dbReference type="NCBI Taxonomy" id="1814"/>
    <lineage>
        <taxon>Bacteria</taxon>
        <taxon>Bacillati</taxon>
        <taxon>Actinomycetota</taxon>
        <taxon>Actinomycetes</taxon>
        <taxon>Pseudonocardiales</taxon>
        <taxon>Pseudonocardiaceae</taxon>
        <taxon>Amycolatopsis</taxon>
        <taxon>Amycolatopsis methanolica group</taxon>
    </lineage>
</organism>
<protein>
    <recommendedName>
        <fullName evidence="5">NDMA-dependent alcohol dehydrogenase</fullName>
        <shortName evidence="5">NDMA-ADH</shortName>
        <ecNumber evidence="3">1.1.99.36</ecNumber>
    </recommendedName>
    <alternativeName>
        <fullName evidence="5">Nicotinoprotein alcohol/aldehyde oxidoreductase</fullName>
    </alternativeName>
</protein>
<proteinExistence type="evidence at protein level"/>
<dbReference type="EC" id="1.1.99.36" evidence="3"/>
<dbReference type="PIR" id="S30335">
    <property type="entry name" value="S30335"/>
</dbReference>
<dbReference type="SMR" id="P80175"/>
<dbReference type="BioCyc" id="MetaCyc:MONOMER-15638"/>
<dbReference type="BRENDA" id="1.1.99.36">
    <property type="organism ID" value="314"/>
</dbReference>
<dbReference type="GO" id="GO:0005829">
    <property type="term" value="C:cytosol"/>
    <property type="evidence" value="ECO:0007669"/>
    <property type="project" value="TreeGrafter"/>
</dbReference>
<dbReference type="GO" id="GO:0051903">
    <property type="term" value="F:S-(hydroxymethyl)glutathione dehydrogenase [NAD(P)+] activity"/>
    <property type="evidence" value="ECO:0007669"/>
    <property type="project" value="TreeGrafter"/>
</dbReference>
<dbReference type="GO" id="GO:0008270">
    <property type="term" value="F:zinc ion binding"/>
    <property type="evidence" value="ECO:0007669"/>
    <property type="project" value="InterPro"/>
</dbReference>
<dbReference type="GO" id="GO:0046294">
    <property type="term" value="P:formaldehyde catabolic process"/>
    <property type="evidence" value="ECO:0007669"/>
    <property type="project" value="TreeGrafter"/>
</dbReference>
<dbReference type="CDD" id="cd08279">
    <property type="entry name" value="Zn_ADH_class_III"/>
    <property type="match status" value="1"/>
</dbReference>
<dbReference type="Gene3D" id="3.90.180.10">
    <property type="entry name" value="Medium-chain alcohol dehydrogenases, catalytic domain"/>
    <property type="match status" value="1"/>
</dbReference>
<dbReference type="Gene3D" id="3.40.50.720">
    <property type="entry name" value="NAD(P)-binding Rossmann-like Domain"/>
    <property type="match status" value="1"/>
</dbReference>
<dbReference type="InterPro" id="IPR013149">
    <property type="entry name" value="ADH-like_C"/>
</dbReference>
<dbReference type="InterPro" id="IPR013154">
    <property type="entry name" value="ADH-like_N"/>
</dbReference>
<dbReference type="InterPro" id="IPR023921">
    <property type="entry name" value="ADH_Zn_actinomycetes"/>
</dbReference>
<dbReference type="InterPro" id="IPR002328">
    <property type="entry name" value="ADH_Zn_CS"/>
</dbReference>
<dbReference type="InterPro" id="IPR011032">
    <property type="entry name" value="GroES-like_sf"/>
</dbReference>
<dbReference type="InterPro" id="IPR036291">
    <property type="entry name" value="NAD(P)-bd_dom_sf"/>
</dbReference>
<dbReference type="InterPro" id="IPR020843">
    <property type="entry name" value="PKS_ER"/>
</dbReference>
<dbReference type="NCBIfam" id="TIGR03989">
    <property type="entry name" value="Rxyl_3153"/>
    <property type="match status" value="1"/>
</dbReference>
<dbReference type="PANTHER" id="PTHR43880">
    <property type="entry name" value="ALCOHOL DEHYDROGENASE"/>
    <property type="match status" value="1"/>
</dbReference>
<dbReference type="PANTHER" id="PTHR43880:SF12">
    <property type="entry name" value="ALCOHOL DEHYDROGENASE CLASS-3"/>
    <property type="match status" value="1"/>
</dbReference>
<dbReference type="Pfam" id="PF08240">
    <property type="entry name" value="ADH_N"/>
    <property type="match status" value="1"/>
</dbReference>
<dbReference type="Pfam" id="PF00107">
    <property type="entry name" value="ADH_zinc_N"/>
    <property type="match status" value="1"/>
</dbReference>
<dbReference type="SMART" id="SM00829">
    <property type="entry name" value="PKS_ER"/>
    <property type="match status" value="1"/>
</dbReference>
<dbReference type="SUPFAM" id="SSF50129">
    <property type="entry name" value="GroES-like"/>
    <property type="match status" value="2"/>
</dbReference>
<dbReference type="SUPFAM" id="SSF51735">
    <property type="entry name" value="NAD(P)-binding Rossmann-fold domains"/>
    <property type="match status" value="1"/>
</dbReference>
<dbReference type="PROSITE" id="PS00059">
    <property type="entry name" value="ADH_ZINC"/>
    <property type="match status" value="1"/>
</dbReference>
<name>ADHN_AMYME</name>